<proteinExistence type="inferred from homology"/>
<protein>
    <recommendedName>
        <fullName evidence="1">UPF0246 protein EUBREC_1226</fullName>
    </recommendedName>
</protein>
<reference key="1">
    <citation type="journal article" date="2009" name="Proc. Natl. Acad. Sci. U.S.A.">
        <title>Characterizing a model human gut microbiota composed of members of its two dominant bacterial phyla.</title>
        <authorList>
            <person name="Mahowald M.A."/>
            <person name="Rey F.E."/>
            <person name="Seedorf H."/>
            <person name="Turnbaugh P.J."/>
            <person name="Fulton R.S."/>
            <person name="Wollam A."/>
            <person name="Shah N."/>
            <person name="Wang C."/>
            <person name="Magrini V."/>
            <person name="Wilson R.K."/>
            <person name="Cantarel B.L."/>
            <person name="Coutinho P.M."/>
            <person name="Henrissat B."/>
            <person name="Crock L.W."/>
            <person name="Russell A."/>
            <person name="Verberkmoes N.C."/>
            <person name="Hettich R.L."/>
            <person name="Gordon J.I."/>
        </authorList>
    </citation>
    <scope>NUCLEOTIDE SEQUENCE [LARGE SCALE GENOMIC DNA]</scope>
    <source>
        <strain>ATCC 33656 / DSM 3377 / JCM 17463 / KCTC 5835 / LMG 30912 / VPI 0990</strain>
    </source>
</reference>
<organism>
    <name type="scientific">Agathobacter rectalis (strain ATCC 33656 / DSM 3377 / JCM 17463 / KCTC 5835 / VPI 0990)</name>
    <name type="common">Eubacterium rectale</name>
    <dbReference type="NCBI Taxonomy" id="515619"/>
    <lineage>
        <taxon>Bacteria</taxon>
        <taxon>Bacillati</taxon>
        <taxon>Bacillota</taxon>
        <taxon>Clostridia</taxon>
        <taxon>Lachnospirales</taxon>
        <taxon>Lachnospiraceae</taxon>
        <taxon>Agathobacter</taxon>
    </lineage>
</organism>
<comment type="similarity">
    <text evidence="1">Belongs to the UPF0246 family.</text>
</comment>
<feature type="chain" id="PRO_1000212426" description="UPF0246 protein EUBREC_1226">
    <location>
        <begin position="1"/>
        <end position="249"/>
    </location>
</feature>
<sequence>MKIILSPAKKMIVDTDNLVPVELPVYIDKTAEVLNWIKSKSKEELKAIWKCNDKIAEQNFNRLENMDLYNRLTPAVLAYEGIAFQYMAPSVFENSQFEYVQNHLRILSAFYGVLKPMDGVTPYRLEMQAKVEIGDAKNLYEYWNDMLYRSVIDESRIIINLASKEYSKCIEKYLTPKDKYITISFCEQAGNKLVTKGTYAKMARGEMVRFMAENDIENPDDIKKFDRLGYIFRSDLSSDSKYVFERKIA</sequence>
<gene>
    <name type="ordered locus">EUBREC_1226</name>
</gene>
<evidence type="ECO:0000255" key="1">
    <source>
        <dbReference type="HAMAP-Rule" id="MF_00652"/>
    </source>
</evidence>
<accession>C4ZHH4</accession>
<dbReference type="EMBL" id="CP001107">
    <property type="protein sequence ID" value="ACR74986.1"/>
    <property type="molecule type" value="Genomic_DNA"/>
</dbReference>
<dbReference type="SMR" id="C4ZHH4"/>
<dbReference type="STRING" id="515619.EUBREC_1226"/>
<dbReference type="PaxDb" id="515619-EUBREC_1226"/>
<dbReference type="KEGG" id="ere:EUBREC_1226"/>
<dbReference type="HOGENOM" id="CLU_061989_1_0_9"/>
<dbReference type="Proteomes" id="UP000001477">
    <property type="component" value="Chromosome"/>
</dbReference>
<dbReference type="GO" id="GO:0005829">
    <property type="term" value="C:cytosol"/>
    <property type="evidence" value="ECO:0007669"/>
    <property type="project" value="TreeGrafter"/>
</dbReference>
<dbReference type="GO" id="GO:0033194">
    <property type="term" value="P:response to hydroperoxide"/>
    <property type="evidence" value="ECO:0007669"/>
    <property type="project" value="TreeGrafter"/>
</dbReference>
<dbReference type="HAMAP" id="MF_00652">
    <property type="entry name" value="UPF0246"/>
    <property type="match status" value="1"/>
</dbReference>
<dbReference type="InterPro" id="IPR005583">
    <property type="entry name" value="YaaA"/>
</dbReference>
<dbReference type="NCBIfam" id="NF002543">
    <property type="entry name" value="PRK02101.1-4"/>
    <property type="match status" value="1"/>
</dbReference>
<dbReference type="PANTHER" id="PTHR30283:SF4">
    <property type="entry name" value="PEROXIDE STRESS RESISTANCE PROTEIN YAAA"/>
    <property type="match status" value="1"/>
</dbReference>
<dbReference type="PANTHER" id="PTHR30283">
    <property type="entry name" value="PEROXIDE STRESS RESPONSE PROTEIN YAAA"/>
    <property type="match status" value="1"/>
</dbReference>
<dbReference type="Pfam" id="PF03883">
    <property type="entry name" value="H2O2_YaaD"/>
    <property type="match status" value="1"/>
</dbReference>
<name>Y1226_AGARV</name>